<proteinExistence type="inferred from homology"/>
<sequence length="79" mass="8478">MNRTNKLILGAVVLGSTLLAGCSSNAKIDQLSSDVQTLSAKVDQLSNDVNAMRSDVQAAKDDAARANQRLDNKVFRICK</sequence>
<accession>Q8Z6K1</accession>
<accession>Q7CA65</accession>
<gene>
    <name evidence="2" type="primary">lpp2</name>
    <name type="synonym">lppB</name>
    <name type="ordered locus">STY1746</name>
    <name type="ordered locus">t1244</name>
</gene>
<dbReference type="EMBL" id="AL513382">
    <property type="protein sequence ID" value="CAD01989.1"/>
    <property type="molecule type" value="Genomic_DNA"/>
</dbReference>
<dbReference type="EMBL" id="AE014613">
    <property type="protein sequence ID" value="AAO68898.1"/>
    <property type="molecule type" value="Genomic_DNA"/>
</dbReference>
<dbReference type="RefSeq" id="NP_456149.1">
    <property type="nucleotide sequence ID" value="NC_003198.1"/>
</dbReference>
<dbReference type="RefSeq" id="WP_001082326.1">
    <property type="nucleotide sequence ID" value="NZ_WSUR01000011.1"/>
</dbReference>
<dbReference type="SMR" id="Q8Z6K1"/>
<dbReference type="STRING" id="220341.gene:17585681"/>
<dbReference type="KEGG" id="stt:t1244"/>
<dbReference type="KEGG" id="sty:STY1746"/>
<dbReference type="PATRIC" id="fig|220341.7.peg.1757"/>
<dbReference type="eggNOG" id="COG4238">
    <property type="taxonomic scope" value="Bacteria"/>
</dbReference>
<dbReference type="HOGENOM" id="CLU_166934_2_1_6"/>
<dbReference type="OMA" id="DNNTRYY"/>
<dbReference type="OrthoDB" id="6567756at2"/>
<dbReference type="Proteomes" id="UP000000541">
    <property type="component" value="Chromosome"/>
</dbReference>
<dbReference type="Proteomes" id="UP000002670">
    <property type="component" value="Chromosome"/>
</dbReference>
<dbReference type="GO" id="GO:0009279">
    <property type="term" value="C:cell outer membrane"/>
    <property type="evidence" value="ECO:0007669"/>
    <property type="project" value="UniProtKB-SubCell"/>
</dbReference>
<dbReference type="GO" id="GO:0005576">
    <property type="term" value="C:extracellular region"/>
    <property type="evidence" value="ECO:0007669"/>
    <property type="project" value="UniProtKB-KW"/>
</dbReference>
<dbReference type="GO" id="GO:0008289">
    <property type="term" value="F:lipid binding"/>
    <property type="evidence" value="ECO:0007669"/>
    <property type="project" value="UniProtKB-UniRule"/>
</dbReference>
<dbReference type="GO" id="GO:0042834">
    <property type="term" value="F:peptidoglycan binding"/>
    <property type="evidence" value="ECO:0007669"/>
    <property type="project" value="UniProtKB-UniRule"/>
</dbReference>
<dbReference type="GO" id="GO:0030258">
    <property type="term" value="P:lipid modification"/>
    <property type="evidence" value="ECO:0007669"/>
    <property type="project" value="UniProtKB-UniRule"/>
</dbReference>
<dbReference type="GO" id="GO:0043580">
    <property type="term" value="P:periplasmic space organization"/>
    <property type="evidence" value="ECO:0007669"/>
    <property type="project" value="UniProtKB-UniRule"/>
</dbReference>
<dbReference type="FunFam" id="1.20.5.190:FF:000002">
    <property type="entry name" value="Major outer membrane lipoprotein"/>
    <property type="match status" value="1"/>
</dbReference>
<dbReference type="Gene3D" id="1.20.5.190">
    <property type="match status" value="1"/>
</dbReference>
<dbReference type="HAMAP" id="MF_00843">
    <property type="entry name" value="Lpp"/>
    <property type="match status" value="1"/>
</dbReference>
<dbReference type="InterPro" id="IPR006817">
    <property type="entry name" value="Lipoprotein_leucine-zipper_dom"/>
</dbReference>
<dbReference type="InterPro" id="IPR016367">
    <property type="entry name" value="MOM_Lpp"/>
</dbReference>
<dbReference type="NCBIfam" id="NF040598">
    <property type="entry name" value="Ala_zip_lipo"/>
    <property type="match status" value="1"/>
</dbReference>
<dbReference type="NCBIfam" id="NF011925">
    <property type="entry name" value="PRK15396.1"/>
    <property type="match status" value="1"/>
</dbReference>
<dbReference type="PANTHER" id="PTHR38763:SF1">
    <property type="entry name" value="MAJOR OUTER MEMBRANE LIPOPROTEIN LPP"/>
    <property type="match status" value="1"/>
</dbReference>
<dbReference type="PANTHER" id="PTHR38763">
    <property type="entry name" value="MAJOR OUTER MEMBRANE PROLIPOPROTEIN LPP"/>
    <property type="match status" value="1"/>
</dbReference>
<dbReference type="Pfam" id="PF04728">
    <property type="entry name" value="LPP"/>
    <property type="match status" value="1"/>
</dbReference>
<dbReference type="PIRSF" id="PIRSF002855">
    <property type="entry name" value="Murein-lipoprotein"/>
    <property type="match status" value="1"/>
</dbReference>
<dbReference type="SUPFAM" id="SSF58042">
    <property type="entry name" value="Outer membrane lipoprotein"/>
    <property type="match status" value="1"/>
</dbReference>
<dbReference type="PROSITE" id="PS51257">
    <property type="entry name" value="PROKAR_LIPOPROTEIN"/>
    <property type="match status" value="1"/>
</dbReference>
<reference key="1">
    <citation type="journal article" date="2001" name="Nature">
        <title>Complete genome sequence of a multiple drug resistant Salmonella enterica serovar Typhi CT18.</title>
        <authorList>
            <person name="Parkhill J."/>
            <person name="Dougan G."/>
            <person name="James K.D."/>
            <person name="Thomson N.R."/>
            <person name="Pickard D."/>
            <person name="Wain J."/>
            <person name="Churcher C.M."/>
            <person name="Mungall K.L."/>
            <person name="Bentley S.D."/>
            <person name="Holden M.T.G."/>
            <person name="Sebaihia M."/>
            <person name="Baker S."/>
            <person name="Basham D."/>
            <person name="Brooks K."/>
            <person name="Chillingworth T."/>
            <person name="Connerton P."/>
            <person name="Cronin A."/>
            <person name="Davis P."/>
            <person name="Davies R.M."/>
            <person name="Dowd L."/>
            <person name="White N."/>
            <person name="Farrar J."/>
            <person name="Feltwell T."/>
            <person name="Hamlin N."/>
            <person name="Haque A."/>
            <person name="Hien T.T."/>
            <person name="Holroyd S."/>
            <person name="Jagels K."/>
            <person name="Krogh A."/>
            <person name="Larsen T.S."/>
            <person name="Leather S."/>
            <person name="Moule S."/>
            <person name="O'Gaora P."/>
            <person name="Parry C."/>
            <person name="Quail M.A."/>
            <person name="Rutherford K.M."/>
            <person name="Simmonds M."/>
            <person name="Skelton J."/>
            <person name="Stevens K."/>
            <person name="Whitehead S."/>
            <person name="Barrell B.G."/>
        </authorList>
    </citation>
    <scope>NUCLEOTIDE SEQUENCE [LARGE SCALE GENOMIC DNA]</scope>
    <source>
        <strain>CT18</strain>
    </source>
</reference>
<reference key="2">
    <citation type="journal article" date="2003" name="J. Bacteriol.">
        <title>Comparative genomics of Salmonella enterica serovar Typhi strains Ty2 and CT18.</title>
        <authorList>
            <person name="Deng W."/>
            <person name="Liou S.-R."/>
            <person name="Plunkett G. III"/>
            <person name="Mayhew G.F."/>
            <person name="Rose D.J."/>
            <person name="Burland V."/>
            <person name="Kodoyianni V."/>
            <person name="Schwartz D.C."/>
            <person name="Blattner F.R."/>
        </authorList>
    </citation>
    <scope>NUCLEOTIDE SEQUENCE [LARGE SCALE GENOMIC DNA]</scope>
    <source>
        <strain>ATCC 700931 / Ty2</strain>
    </source>
</reference>
<protein>
    <recommendedName>
        <fullName evidence="2">Major outer membrane lipoprotein Lpp 2</fullName>
    </recommendedName>
    <alternativeName>
        <fullName evidence="2">Braun lipoprotein 2</fullName>
        <shortName evidence="2">BLP 2</shortName>
    </alternativeName>
    <alternativeName>
        <fullName evidence="2">Murein lipoprotein 2</fullName>
    </alternativeName>
</protein>
<evidence type="ECO:0000250" key="1">
    <source>
        <dbReference type="UniProtKB" id="E8XH69"/>
    </source>
</evidence>
<evidence type="ECO:0000255" key="2">
    <source>
        <dbReference type="HAMAP-Rule" id="MF_00843"/>
    </source>
</evidence>
<evidence type="ECO:0000305" key="3"/>
<name>LPP2_SALTI</name>
<keyword id="KW-0998">Cell outer membrane</keyword>
<keyword id="KW-0134">Cell wall</keyword>
<keyword id="KW-0175">Coiled coil</keyword>
<keyword id="KW-0449">Lipoprotein</keyword>
<keyword id="KW-0472">Membrane</keyword>
<keyword id="KW-0564">Palmitate</keyword>
<keyword id="KW-0572">Peptidoglycan-anchor</keyword>
<keyword id="KW-0677">Repeat</keyword>
<keyword id="KW-0964">Secreted</keyword>
<keyword id="KW-0732">Signal</keyword>
<organism>
    <name type="scientific">Salmonella typhi</name>
    <dbReference type="NCBI Taxonomy" id="90370"/>
    <lineage>
        <taxon>Bacteria</taxon>
        <taxon>Pseudomonadati</taxon>
        <taxon>Pseudomonadota</taxon>
        <taxon>Gammaproteobacteria</taxon>
        <taxon>Enterobacterales</taxon>
        <taxon>Enterobacteriaceae</taxon>
        <taxon>Salmonella</taxon>
    </lineage>
</organism>
<feature type="signal peptide" evidence="2">
    <location>
        <begin position="1"/>
        <end position="21"/>
    </location>
</feature>
<feature type="chain" id="PRO_0000018343" description="Major outer membrane lipoprotein Lpp 2" evidence="2">
    <location>
        <begin position="22"/>
        <end position="79"/>
    </location>
</feature>
<feature type="repeat" evidence="2">
    <location>
        <begin position="25"/>
        <end position="35"/>
    </location>
</feature>
<feature type="repeat" evidence="2">
    <location>
        <begin position="39"/>
        <end position="49"/>
    </location>
</feature>
<feature type="coiled-coil region" evidence="2">
    <location>
        <begin position="28"/>
        <end position="69"/>
    </location>
</feature>
<feature type="modified residue" description="N6-murein peptidoglycan lysine" evidence="3">
    <location>
        <position position="79"/>
    </location>
</feature>
<feature type="lipid moiety-binding region" description="N-palmitoyl cysteine" evidence="2">
    <location>
        <position position="22"/>
    </location>
</feature>
<feature type="lipid moiety-binding region" description="S-diacylglycerol cysteine" evidence="2">
    <location>
        <position position="22"/>
    </location>
</feature>
<comment type="function">
    <text evidence="2">A highly abundant outer membrane lipoprotein that controls the distance between the inner and outer membranes. The only protein known to be covalently linked to the peptidoglycan network (PGN). Also non-covalently binds the PGN. The link between the cell outer membrane and PGN contributes to maintenance of the structural and functional integrity of the cell envelope, and maintains the correct distance between the PGN and the outer membrane.</text>
</comment>
<comment type="subunit">
    <text evidence="2">Homotrimer.</text>
</comment>
<comment type="subcellular location">
    <subcellularLocation>
        <location evidence="2">Cell outer membrane</location>
        <topology evidence="2">Lipid-anchor</topology>
        <orientation evidence="2">Periplasmic side</orientation>
    </subcellularLocation>
    <subcellularLocation>
        <location evidence="2">Secreted</location>
        <location evidence="2">Cell wall</location>
        <topology evidence="2">Peptidoglycan-anchor</topology>
    </subcellularLocation>
    <text evidence="2">Attached via its lipidated N-terminus to the inner leaflet of the outer membrane. Attached to the peptidoglycan network (PGN) via its C-terminus.</text>
</comment>
<comment type="induction">
    <text evidence="1">This gene is probably poorly expressed.</text>
</comment>
<comment type="similarity">
    <text evidence="2">Belongs to the Lpp family.</text>
</comment>